<accession>A7MQG1</accession>
<comment type="function">
    <text evidence="1">Involved in allosteric regulation of aspartate carbamoyltransferase.</text>
</comment>
<comment type="cofactor">
    <cofactor evidence="1">
        <name>Zn(2+)</name>
        <dbReference type="ChEBI" id="CHEBI:29105"/>
    </cofactor>
    <text evidence="1">Binds 1 zinc ion per subunit.</text>
</comment>
<comment type="subunit">
    <text evidence="1">Contains catalytic and regulatory chains.</text>
</comment>
<comment type="similarity">
    <text evidence="1">Belongs to the PyrI family.</text>
</comment>
<evidence type="ECO:0000255" key="1">
    <source>
        <dbReference type="HAMAP-Rule" id="MF_00002"/>
    </source>
</evidence>
<organism>
    <name type="scientific">Cronobacter sakazakii (strain ATCC BAA-894)</name>
    <name type="common">Enterobacter sakazakii</name>
    <dbReference type="NCBI Taxonomy" id="290339"/>
    <lineage>
        <taxon>Bacteria</taxon>
        <taxon>Pseudomonadati</taxon>
        <taxon>Pseudomonadota</taxon>
        <taxon>Gammaproteobacteria</taxon>
        <taxon>Enterobacterales</taxon>
        <taxon>Enterobacteriaceae</taxon>
        <taxon>Cronobacter</taxon>
    </lineage>
</organism>
<protein>
    <recommendedName>
        <fullName evidence="1">Aspartate carbamoyltransferase regulatory chain</fullName>
    </recommendedName>
</protein>
<reference key="1">
    <citation type="journal article" date="2010" name="PLoS ONE">
        <title>Genome sequence of Cronobacter sakazakii BAA-894 and comparative genomic hybridization analysis with other Cronobacter species.</title>
        <authorList>
            <person name="Kucerova E."/>
            <person name="Clifton S.W."/>
            <person name="Xia X.Q."/>
            <person name="Long F."/>
            <person name="Porwollik S."/>
            <person name="Fulton L."/>
            <person name="Fronick C."/>
            <person name="Minx P."/>
            <person name="Kyung K."/>
            <person name="Warren W."/>
            <person name="Fulton R."/>
            <person name="Feng D."/>
            <person name="Wollam A."/>
            <person name="Shah N."/>
            <person name="Bhonagiri V."/>
            <person name="Nash W.E."/>
            <person name="Hallsworth-Pepin K."/>
            <person name="Wilson R.K."/>
            <person name="McClelland M."/>
            <person name="Forsythe S.J."/>
        </authorList>
    </citation>
    <scope>NUCLEOTIDE SEQUENCE [LARGE SCALE GENOMIC DNA]</scope>
    <source>
        <strain>ATCC BAA-894</strain>
    </source>
</reference>
<name>PYRI_CROS8</name>
<gene>
    <name evidence="1" type="primary">pyrI</name>
    <name type="ordered locus">ESA_03482</name>
</gene>
<dbReference type="EMBL" id="CP000783">
    <property type="protein sequence ID" value="ABU78697.1"/>
    <property type="molecule type" value="Genomic_DNA"/>
</dbReference>
<dbReference type="RefSeq" id="WP_007891315.1">
    <property type="nucleotide sequence ID" value="NC_009778.1"/>
</dbReference>
<dbReference type="SMR" id="A7MQG1"/>
<dbReference type="GeneID" id="56732144"/>
<dbReference type="KEGG" id="esa:ESA_03482"/>
<dbReference type="HOGENOM" id="CLU_128576_0_0_6"/>
<dbReference type="Proteomes" id="UP000000260">
    <property type="component" value="Chromosome"/>
</dbReference>
<dbReference type="GO" id="GO:0009347">
    <property type="term" value="C:aspartate carbamoyltransferase complex"/>
    <property type="evidence" value="ECO:0007669"/>
    <property type="project" value="InterPro"/>
</dbReference>
<dbReference type="GO" id="GO:0046872">
    <property type="term" value="F:metal ion binding"/>
    <property type="evidence" value="ECO:0007669"/>
    <property type="project" value="UniProtKB-KW"/>
</dbReference>
<dbReference type="GO" id="GO:0006207">
    <property type="term" value="P:'de novo' pyrimidine nucleobase biosynthetic process"/>
    <property type="evidence" value="ECO:0007669"/>
    <property type="project" value="InterPro"/>
</dbReference>
<dbReference type="GO" id="GO:0006221">
    <property type="term" value="P:pyrimidine nucleotide biosynthetic process"/>
    <property type="evidence" value="ECO:0007669"/>
    <property type="project" value="UniProtKB-UniRule"/>
</dbReference>
<dbReference type="FunFam" id="3.30.70.140:FF:000001">
    <property type="entry name" value="Aspartate carbamoyltransferase regulatory chain"/>
    <property type="match status" value="1"/>
</dbReference>
<dbReference type="Gene3D" id="2.30.30.20">
    <property type="entry name" value="Aspartate carbamoyltransferase regulatory subunit, C-terminal domain"/>
    <property type="match status" value="1"/>
</dbReference>
<dbReference type="Gene3D" id="3.30.70.140">
    <property type="entry name" value="Aspartate carbamoyltransferase regulatory subunit, N-terminal domain"/>
    <property type="match status" value="1"/>
</dbReference>
<dbReference type="HAMAP" id="MF_00002">
    <property type="entry name" value="Asp_carb_tr_reg"/>
    <property type="match status" value="1"/>
</dbReference>
<dbReference type="InterPro" id="IPR020545">
    <property type="entry name" value="Asp_carbamoyltransf_reg_N"/>
</dbReference>
<dbReference type="InterPro" id="IPR002801">
    <property type="entry name" value="Asp_carbamoylTrfase_reg"/>
</dbReference>
<dbReference type="InterPro" id="IPR020542">
    <property type="entry name" value="Asp_carbamoyltrfase_reg_C"/>
</dbReference>
<dbReference type="InterPro" id="IPR036792">
    <property type="entry name" value="Asp_carbatrfase_reg_C_sf"/>
</dbReference>
<dbReference type="InterPro" id="IPR036793">
    <property type="entry name" value="Asp_carbatrfase_reg_N_sf"/>
</dbReference>
<dbReference type="NCBIfam" id="TIGR00240">
    <property type="entry name" value="ATCase_reg"/>
    <property type="match status" value="1"/>
</dbReference>
<dbReference type="PANTHER" id="PTHR35805">
    <property type="entry name" value="ASPARTATE CARBAMOYLTRANSFERASE REGULATORY CHAIN"/>
    <property type="match status" value="1"/>
</dbReference>
<dbReference type="PANTHER" id="PTHR35805:SF1">
    <property type="entry name" value="ASPARTATE CARBAMOYLTRANSFERASE REGULATORY CHAIN"/>
    <property type="match status" value="1"/>
</dbReference>
<dbReference type="Pfam" id="PF01948">
    <property type="entry name" value="PyrI"/>
    <property type="match status" value="1"/>
</dbReference>
<dbReference type="Pfam" id="PF02748">
    <property type="entry name" value="PyrI_C"/>
    <property type="match status" value="1"/>
</dbReference>
<dbReference type="SUPFAM" id="SSF57825">
    <property type="entry name" value="Aspartate carbamoyltransferase, Regulatory-chain, C-terminal domain"/>
    <property type="match status" value="1"/>
</dbReference>
<dbReference type="SUPFAM" id="SSF54893">
    <property type="entry name" value="Aspartate carbamoyltransferase, Regulatory-chain, N-terminal domain"/>
    <property type="match status" value="1"/>
</dbReference>
<proteinExistence type="inferred from homology"/>
<feature type="chain" id="PRO_1000000035" description="Aspartate carbamoyltransferase regulatory chain">
    <location>
        <begin position="1"/>
        <end position="153"/>
    </location>
</feature>
<feature type="binding site" evidence="1">
    <location>
        <position position="109"/>
    </location>
    <ligand>
        <name>Zn(2+)</name>
        <dbReference type="ChEBI" id="CHEBI:29105"/>
    </ligand>
</feature>
<feature type="binding site" evidence="1">
    <location>
        <position position="114"/>
    </location>
    <ligand>
        <name>Zn(2+)</name>
        <dbReference type="ChEBI" id="CHEBI:29105"/>
    </ligand>
</feature>
<feature type="binding site" evidence="1">
    <location>
        <position position="138"/>
    </location>
    <ligand>
        <name>Zn(2+)</name>
        <dbReference type="ChEBI" id="CHEBI:29105"/>
    </ligand>
</feature>
<feature type="binding site" evidence="1">
    <location>
        <position position="141"/>
    </location>
    <ligand>
        <name>Zn(2+)</name>
        <dbReference type="ChEBI" id="CHEBI:29105"/>
    </ligand>
</feature>
<keyword id="KW-0479">Metal-binding</keyword>
<keyword id="KW-0665">Pyrimidine biosynthesis</keyword>
<keyword id="KW-1185">Reference proteome</keyword>
<keyword id="KW-0862">Zinc</keyword>
<sequence length="153" mass="17110">MTHDNKLQVEAIRRGTVIDHIPAQVGFKLLSLFKLTETDQRITIGLNLPSGEMGRKDLIKIENTFLTDEQVNQLALYAPQATVNRIDDYEVVGKSKPSLPDRIENVLVCPNGNCISRIEPVSSSFAVKTRGDAVQLKCKYCEKEFARHVVLAD</sequence>